<proteinExistence type="inferred from homology"/>
<gene>
    <name type="primary">bPT2</name>
    <name type="ORF">GSPATT00021361001</name>
</gene>
<gene>
    <name type="primary">bPT3</name>
    <name type="ORF">GSPATT00036831001</name>
</gene>
<keyword id="KW-0963">Cytoplasm</keyword>
<keyword id="KW-0206">Cytoskeleton</keyword>
<keyword id="KW-0342">GTP-binding</keyword>
<keyword id="KW-0460">Magnesium</keyword>
<keyword id="KW-0479">Metal-binding</keyword>
<keyword id="KW-0493">Microtubule</keyword>
<keyword id="KW-0547">Nucleotide-binding</keyword>
<keyword id="KW-1185">Reference proteome</keyword>
<organism>
    <name type="scientific">Paramecium tetraurelia</name>
    <dbReference type="NCBI Taxonomy" id="5888"/>
    <lineage>
        <taxon>Eukaryota</taxon>
        <taxon>Sar</taxon>
        <taxon>Alveolata</taxon>
        <taxon>Ciliophora</taxon>
        <taxon>Intramacronucleata</taxon>
        <taxon>Oligohymenophorea</taxon>
        <taxon>Peniculida</taxon>
        <taxon>Parameciidae</taxon>
        <taxon>Paramecium</taxon>
    </lineage>
</organism>
<dbReference type="EMBL" id="X67237">
    <property type="protein sequence ID" value="CAA47663.1"/>
    <property type="molecule type" value="Genomic_DNA"/>
</dbReference>
<dbReference type="EMBL" id="AJ608918">
    <property type="protein sequence ID" value="CAE75645.1"/>
    <property type="molecule type" value="Genomic_DNA"/>
</dbReference>
<dbReference type="EMBL" id="AJ608919">
    <property type="protein sequence ID" value="CAE75646.1"/>
    <property type="molecule type" value="Genomic_DNA"/>
</dbReference>
<dbReference type="EMBL" id="CT868056">
    <property type="protein sequence ID" value="CAK68048.1"/>
    <property type="molecule type" value="Genomic_DNA"/>
</dbReference>
<dbReference type="EMBL" id="CT868629">
    <property type="protein sequence ID" value="CAK87728.1"/>
    <property type="molecule type" value="Genomic_DNA"/>
</dbReference>
<dbReference type="PIR" id="S25182">
    <property type="entry name" value="S25182"/>
</dbReference>
<dbReference type="RefSeq" id="XP_001435445.1">
    <property type="nucleotide sequence ID" value="XM_001435408.1"/>
</dbReference>
<dbReference type="RefSeq" id="XP_001455125.1">
    <property type="nucleotide sequence ID" value="XM_001455088.1"/>
</dbReference>
<dbReference type="SMR" id="P33188"/>
<dbReference type="FunCoup" id="P33188">
    <property type="interactions" value="329"/>
</dbReference>
<dbReference type="STRING" id="5888.P33188"/>
<dbReference type="EnsemblProtists" id="CAK68048">
    <property type="protein sequence ID" value="CAK68048"/>
    <property type="gene ID" value="GSPATT00036831001"/>
</dbReference>
<dbReference type="EnsemblProtists" id="CAK87728">
    <property type="protein sequence ID" value="CAK87728"/>
    <property type="gene ID" value="GSPATT00021361001"/>
</dbReference>
<dbReference type="GeneID" id="5021230"/>
<dbReference type="GeneID" id="5040910"/>
<dbReference type="KEGG" id="ptm:GSPATT00021361001"/>
<dbReference type="KEGG" id="ptm:GSPATT00036831001"/>
<dbReference type="eggNOG" id="KOG1375">
    <property type="taxonomic scope" value="Eukaryota"/>
</dbReference>
<dbReference type="HOGENOM" id="CLU_015718_1_1_1"/>
<dbReference type="InParanoid" id="P33188"/>
<dbReference type="OMA" id="WVPRSVN"/>
<dbReference type="OrthoDB" id="411080at2759"/>
<dbReference type="Proteomes" id="UP000000600">
    <property type="component" value="Partially assembled WGS sequence"/>
</dbReference>
<dbReference type="GO" id="GO:0005737">
    <property type="term" value="C:cytoplasm"/>
    <property type="evidence" value="ECO:0000318"/>
    <property type="project" value="GO_Central"/>
</dbReference>
<dbReference type="GO" id="GO:0005874">
    <property type="term" value="C:microtubule"/>
    <property type="evidence" value="ECO:0000318"/>
    <property type="project" value="GO_Central"/>
</dbReference>
<dbReference type="GO" id="GO:0005525">
    <property type="term" value="F:GTP binding"/>
    <property type="evidence" value="ECO:0000318"/>
    <property type="project" value="GO_Central"/>
</dbReference>
<dbReference type="GO" id="GO:0003924">
    <property type="term" value="F:GTPase activity"/>
    <property type="evidence" value="ECO:0007669"/>
    <property type="project" value="InterPro"/>
</dbReference>
<dbReference type="GO" id="GO:0046872">
    <property type="term" value="F:metal ion binding"/>
    <property type="evidence" value="ECO:0007669"/>
    <property type="project" value="UniProtKB-KW"/>
</dbReference>
<dbReference type="GO" id="GO:0005200">
    <property type="term" value="F:structural constituent of cytoskeleton"/>
    <property type="evidence" value="ECO:0000318"/>
    <property type="project" value="GO_Central"/>
</dbReference>
<dbReference type="GO" id="GO:0000226">
    <property type="term" value="P:microtubule cytoskeleton organization"/>
    <property type="evidence" value="ECO:0000318"/>
    <property type="project" value="GO_Central"/>
</dbReference>
<dbReference type="GO" id="GO:0000278">
    <property type="term" value="P:mitotic cell cycle"/>
    <property type="evidence" value="ECO:0000318"/>
    <property type="project" value="GO_Central"/>
</dbReference>
<dbReference type="CDD" id="cd02187">
    <property type="entry name" value="beta_tubulin"/>
    <property type="match status" value="1"/>
</dbReference>
<dbReference type="FunFam" id="1.10.287.600:FF:000002">
    <property type="entry name" value="Tubulin beta chain"/>
    <property type="match status" value="1"/>
</dbReference>
<dbReference type="FunFam" id="3.30.1330.20:FF:000002">
    <property type="entry name" value="Tubulin beta chain"/>
    <property type="match status" value="1"/>
</dbReference>
<dbReference type="FunFam" id="3.40.50.1440:FF:000005">
    <property type="entry name" value="Tubulin beta chain"/>
    <property type="match status" value="1"/>
</dbReference>
<dbReference type="Gene3D" id="1.10.287.600">
    <property type="entry name" value="Helix hairpin bin"/>
    <property type="match status" value="1"/>
</dbReference>
<dbReference type="Gene3D" id="3.30.1330.20">
    <property type="entry name" value="Tubulin/FtsZ, C-terminal domain"/>
    <property type="match status" value="1"/>
</dbReference>
<dbReference type="Gene3D" id="3.40.50.1440">
    <property type="entry name" value="Tubulin/FtsZ, GTPase domain"/>
    <property type="match status" value="1"/>
</dbReference>
<dbReference type="InterPro" id="IPR013838">
    <property type="entry name" value="Beta-tubulin_BS"/>
</dbReference>
<dbReference type="InterPro" id="IPR002453">
    <property type="entry name" value="Beta_tubulin"/>
</dbReference>
<dbReference type="InterPro" id="IPR008280">
    <property type="entry name" value="Tub_FtsZ_C"/>
</dbReference>
<dbReference type="InterPro" id="IPR000217">
    <property type="entry name" value="Tubulin"/>
</dbReference>
<dbReference type="InterPro" id="IPR037103">
    <property type="entry name" value="Tubulin/FtsZ-like_C"/>
</dbReference>
<dbReference type="InterPro" id="IPR018316">
    <property type="entry name" value="Tubulin/FtsZ_2-layer-sand-dom"/>
</dbReference>
<dbReference type="InterPro" id="IPR036525">
    <property type="entry name" value="Tubulin/FtsZ_GTPase_sf"/>
</dbReference>
<dbReference type="InterPro" id="IPR023123">
    <property type="entry name" value="Tubulin_C"/>
</dbReference>
<dbReference type="InterPro" id="IPR017975">
    <property type="entry name" value="Tubulin_CS"/>
</dbReference>
<dbReference type="InterPro" id="IPR003008">
    <property type="entry name" value="Tubulin_FtsZ_GTPase"/>
</dbReference>
<dbReference type="PANTHER" id="PTHR11588">
    <property type="entry name" value="TUBULIN"/>
    <property type="match status" value="1"/>
</dbReference>
<dbReference type="Pfam" id="PF00091">
    <property type="entry name" value="Tubulin"/>
    <property type="match status" value="1"/>
</dbReference>
<dbReference type="Pfam" id="PF03953">
    <property type="entry name" value="Tubulin_C"/>
    <property type="match status" value="1"/>
</dbReference>
<dbReference type="PRINTS" id="PR01163">
    <property type="entry name" value="BETATUBULIN"/>
</dbReference>
<dbReference type="PRINTS" id="PR01161">
    <property type="entry name" value="TUBULIN"/>
</dbReference>
<dbReference type="SMART" id="SM00864">
    <property type="entry name" value="Tubulin"/>
    <property type="match status" value="1"/>
</dbReference>
<dbReference type="SMART" id="SM00865">
    <property type="entry name" value="Tubulin_C"/>
    <property type="match status" value="1"/>
</dbReference>
<dbReference type="SUPFAM" id="SSF55307">
    <property type="entry name" value="Tubulin C-terminal domain-like"/>
    <property type="match status" value="1"/>
</dbReference>
<dbReference type="SUPFAM" id="SSF52490">
    <property type="entry name" value="Tubulin nucleotide-binding domain-like"/>
    <property type="match status" value="1"/>
</dbReference>
<dbReference type="PROSITE" id="PS00227">
    <property type="entry name" value="TUBULIN"/>
    <property type="match status" value="1"/>
</dbReference>
<dbReference type="PROSITE" id="PS00228">
    <property type="entry name" value="TUBULIN_B_AUTOREG"/>
    <property type="match status" value="1"/>
</dbReference>
<comment type="function">
    <text>Tubulin is the major constituent of microtubules, a cylinder consisting of laterally associated linear protofilaments composed of alpha- and beta-tubulin heterodimers. Microtubules grow by the addition of GTP-tubulin dimers to the microtubule end, where a stabilizing cap forms. Below the cap, tubulin dimers are in GDP-bound state, owing to GTPase activity of alpha-tubulin.</text>
</comment>
<comment type="cofactor">
    <cofactor evidence="1">
        <name>Mg(2+)</name>
        <dbReference type="ChEBI" id="CHEBI:18420"/>
    </cofactor>
</comment>
<comment type="subunit">
    <text>Dimer of alpha and beta chains. A typical microtubule is a hollow water-filled tube with an outer diameter of 25 nm and an inner diameter of 15 nM. Alpha-beta heterodimers associate head-to-tail to form protofilaments running lengthwise along the microtubule wall with the beta-tubulin subunit facing the microtubule plus end conferring a structural polarity. Microtubules usually have 13 protofilaments but different protofilament numbers can be found in some organisms and specialized cells.</text>
</comment>
<comment type="subcellular location">
    <subcellularLocation>
        <location>Cytoplasm</location>
        <location>Cytoskeleton</location>
    </subcellularLocation>
</comment>
<comment type="similarity">
    <text evidence="3">Belongs to the tubulin family.</text>
</comment>
<reference key="1">
    <citation type="journal article" date="1992" name="EMBO J.">
        <title>The beta-tubulin genes of Paramecium are interrupted by two 27 bp introns.</title>
        <authorList>
            <person name="Dupuis P."/>
        </authorList>
    </citation>
    <scope>NUCLEOTIDE SEQUENCE [GENOMIC DNA]</scope>
    <source>
        <strain>Stock d4-2</strain>
    </source>
</reference>
<reference key="2">
    <citation type="journal article" date="2004" name="Eukaryot. Cell">
        <title>Genetic evidence for interaction between eta- and beta-tubulins.</title>
        <authorList>
            <person name="Ruiz F."/>
            <person name="Dupuis-Williams P."/>
            <person name="Klotz C."/>
            <person name="Forquignon F."/>
            <person name="Bergdoll M."/>
            <person name="Beisson J."/>
            <person name="Koll F."/>
        </authorList>
    </citation>
    <scope>NUCLEOTIDE SEQUENCE [GENOMIC DNA]</scope>
</reference>
<reference key="3">
    <citation type="journal article" date="2006" name="Nature">
        <title>Global trends of whole-genome duplications revealed by the ciliate Paramecium tetraurelia.</title>
        <authorList>
            <person name="Aury J.-M."/>
            <person name="Jaillon O."/>
            <person name="Duret L."/>
            <person name="Noel B."/>
            <person name="Jubin C."/>
            <person name="Porcel B.M."/>
            <person name="Segurens B."/>
            <person name="Daubin V."/>
            <person name="Anthouard V."/>
            <person name="Aiach N."/>
            <person name="Arnaiz O."/>
            <person name="Billaut A."/>
            <person name="Beisson J."/>
            <person name="Blanc I."/>
            <person name="Bouhouche K."/>
            <person name="Camara F."/>
            <person name="Duharcourt S."/>
            <person name="Guigo R."/>
            <person name="Gogendeau D."/>
            <person name="Katinka M."/>
            <person name="Keller A.-M."/>
            <person name="Kissmehl R."/>
            <person name="Klotz C."/>
            <person name="Koll F."/>
            <person name="Le Mouel A."/>
            <person name="Lepere G."/>
            <person name="Malinsky S."/>
            <person name="Nowacki M."/>
            <person name="Nowak J.K."/>
            <person name="Plattner H."/>
            <person name="Poulain J."/>
            <person name="Ruiz F."/>
            <person name="Serrano V."/>
            <person name="Zagulski M."/>
            <person name="Dessen P."/>
            <person name="Betermier M."/>
            <person name="Weissenbach J."/>
            <person name="Scarpelli C."/>
            <person name="Schaechter V."/>
            <person name="Sperling L."/>
            <person name="Meyer E."/>
            <person name="Cohen J."/>
            <person name="Wincker P."/>
        </authorList>
    </citation>
    <scope>NUCLEOTIDE SEQUENCE [LARGE SCALE GENOMIC DNA]</scope>
    <source>
        <strain>Stock d4-2</strain>
    </source>
</reference>
<name>TBB1_PARTE</name>
<protein>
    <recommendedName>
        <fullName>Tubulin beta chain</fullName>
    </recommendedName>
    <alternativeName>
        <fullName>Beta-tubulin</fullName>
    </alternativeName>
</protein>
<evidence type="ECO:0000250" key="1">
    <source>
        <dbReference type="UniProtKB" id="P68363"/>
    </source>
</evidence>
<evidence type="ECO:0000250" key="2">
    <source>
        <dbReference type="UniProtKB" id="Q13509"/>
    </source>
</evidence>
<evidence type="ECO:0000305" key="3"/>
<feature type="chain" id="PRO_0000048307" description="Tubulin beta chain">
    <location>
        <begin position="1"/>
        <end position="442"/>
    </location>
</feature>
<feature type="binding site" evidence="2">
    <location>
        <position position="11"/>
    </location>
    <ligand>
        <name>GTP</name>
        <dbReference type="ChEBI" id="CHEBI:37565"/>
    </ligand>
</feature>
<feature type="binding site" evidence="1">
    <location>
        <position position="69"/>
    </location>
    <ligand>
        <name>GTP</name>
        <dbReference type="ChEBI" id="CHEBI:37565"/>
    </ligand>
</feature>
<feature type="binding site" evidence="1">
    <location>
        <position position="69"/>
    </location>
    <ligand>
        <name>Mg(2+)</name>
        <dbReference type="ChEBI" id="CHEBI:18420"/>
    </ligand>
</feature>
<feature type="binding site" evidence="2">
    <location>
        <position position="138"/>
    </location>
    <ligand>
        <name>GTP</name>
        <dbReference type="ChEBI" id="CHEBI:37565"/>
    </ligand>
</feature>
<feature type="binding site" evidence="2">
    <location>
        <position position="142"/>
    </location>
    <ligand>
        <name>GTP</name>
        <dbReference type="ChEBI" id="CHEBI:37565"/>
    </ligand>
</feature>
<feature type="binding site" evidence="2">
    <location>
        <position position="143"/>
    </location>
    <ligand>
        <name>GTP</name>
        <dbReference type="ChEBI" id="CHEBI:37565"/>
    </ligand>
</feature>
<feature type="binding site" evidence="2">
    <location>
        <position position="144"/>
    </location>
    <ligand>
        <name>GTP</name>
        <dbReference type="ChEBI" id="CHEBI:37565"/>
    </ligand>
</feature>
<feature type="binding site" evidence="2">
    <location>
        <position position="204"/>
    </location>
    <ligand>
        <name>GTP</name>
        <dbReference type="ChEBI" id="CHEBI:37565"/>
    </ligand>
</feature>
<feature type="binding site" evidence="2">
    <location>
        <position position="226"/>
    </location>
    <ligand>
        <name>GTP</name>
        <dbReference type="ChEBI" id="CHEBI:37565"/>
    </ligand>
</feature>
<accession>P33188</accession>
<accession>Q546B0</accession>
<sequence length="442" mass="49456">MREIVHIQGGQCGNQIGAKFWEVISDEHGIDPTGTYHGDSDLQLERINVYYNEATGGRYVPRAILMDLEPGTMDSVRAGPFGQLFRPDNFVFGQTGAGNNWAKGHYTEGAELIDSVLDVVRKEAEGCDCLQGFQITHSLGGGTGSGMGTLLISKVREEYPDRIMETFSVVPSPKVSDTVVEPYNATLSVHQLVENADECMVIDNEALYDICFRTLKLTTPTYGDLNHLVSAAMSGVTCCLRFPGQLNSDLRKLAVNLIPFPRLHFFMIGFAPLTSRGSQQYRALTVPELTQQMFDAKNMMCAADPRHGRYLTASALFRGRMSTKEVDEQMLNVQNKNSSYFVEWIPNNIKSSICDIPPKGLKMAVTFVGNSTAIQEMFKRVAEQFTAMFRRKAFLHWYTGEGMDEMEFTEAESNMNDLVSEYQQYQDATAEEEGEFEEEGEQ</sequence>